<accession>B2US41</accession>
<keyword id="KW-0028">Amino-acid biosynthesis</keyword>
<keyword id="KW-0170">Cobalt</keyword>
<keyword id="KW-0220">Diaminopimelate biosynthesis</keyword>
<keyword id="KW-0378">Hydrolase</keyword>
<keyword id="KW-0457">Lysine biosynthesis</keyword>
<keyword id="KW-0479">Metal-binding</keyword>
<keyword id="KW-0862">Zinc</keyword>
<comment type="function">
    <text evidence="1">Catalyzes the hydrolysis of N-succinyl-L,L-diaminopimelic acid (SDAP), forming succinate and LL-2,6-diaminopimelate (DAP), an intermediate involved in the bacterial biosynthesis of lysine and meso-diaminopimelic acid, an essential component of bacterial cell walls.</text>
</comment>
<comment type="catalytic activity">
    <reaction evidence="1">
        <text>N-succinyl-(2S,6S)-2,6-diaminopimelate + H2O = (2S,6S)-2,6-diaminopimelate + succinate</text>
        <dbReference type="Rhea" id="RHEA:22608"/>
        <dbReference type="ChEBI" id="CHEBI:15377"/>
        <dbReference type="ChEBI" id="CHEBI:30031"/>
        <dbReference type="ChEBI" id="CHEBI:57609"/>
        <dbReference type="ChEBI" id="CHEBI:58087"/>
        <dbReference type="EC" id="3.5.1.18"/>
    </reaction>
</comment>
<comment type="cofactor">
    <cofactor evidence="1">
        <name>Zn(2+)</name>
        <dbReference type="ChEBI" id="CHEBI:29105"/>
    </cofactor>
    <cofactor evidence="1">
        <name>Co(2+)</name>
        <dbReference type="ChEBI" id="CHEBI:48828"/>
    </cofactor>
    <text evidence="1">Binds 2 Zn(2+) or Co(2+) ions per subunit.</text>
</comment>
<comment type="pathway">
    <text evidence="1">Amino-acid biosynthesis; L-lysine biosynthesis via DAP pathway; LL-2,6-diaminopimelate from (S)-tetrahydrodipicolinate (succinylase route): step 3/3.</text>
</comment>
<comment type="subunit">
    <text evidence="1">Homodimer.</text>
</comment>
<comment type="similarity">
    <text evidence="1">Belongs to the peptidase M20A family. DapE subfamily.</text>
</comment>
<protein>
    <recommendedName>
        <fullName evidence="1">Succinyl-diaminopimelate desuccinylase</fullName>
        <shortName evidence="1">SDAP desuccinylase</shortName>
        <ecNumber evidence="1">3.5.1.18</ecNumber>
    </recommendedName>
    <alternativeName>
        <fullName evidence="1">N-succinyl-LL-2,6-diaminoheptanedioate amidohydrolase</fullName>
    </alternativeName>
</protein>
<evidence type="ECO:0000255" key="1">
    <source>
        <dbReference type="HAMAP-Rule" id="MF_01690"/>
    </source>
</evidence>
<dbReference type="EC" id="3.5.1.18" evidence="1"/>
<dbReference type="EMBL" id="CP001072">
    <property type="protein sequence ID" value="ACD47673.1"/>
    <property type="molecule type" value="Genomic_DNA"/>
</dbReference>
<dbReference type="RefSeq" id="WP_000339235.1">
    <property type="nucleotide sequence ID" value="NC_010698.2"/>
</dbReference>
<dbReference type="SMR" id="B2US41"/>
<dbReference type="KEGG" id="hps:HPSH_01095"/>
<dbReference type="HOGENOM" id="CLU_021802_4_0_7"/>
<dbReference type="UniPathway" id="UPA00034">
    <property type="reaction ID" value="UER00021"/>
</dbReference>
<dbReference type="GO" id="GO:0008777">
    <property type="term" value="F:acetylornithine deacetylase activity"/>
    <property type="evidence" value="ECO:0007669"/>
    <property type="project" value="TreeGrafter"/>
</dbReference>
<dbReference type="GO" id="GO:0046872">
    <property type="term" value="F:metal ion binding"/>
    <property type="evidence" value="ECO:0007669"/>
    <property type="project" value="UniProtKB-KW"/>
</dbReference>
<dbReference type="GO" id="GO:0009014">
    <property type="term" value="F:succinyl-diaminopimelate desuccinylase activity"/>
    <property type="evidence" value="ECO:0007669"/>
    <property type="project" value="UniProtKB-EC"/>
</dbReference>
<dbReference type="GO" id="GO:0019877">
    <property type="term" value="P:diaminopimelate biosynthetic process"/>
    <property type="evidence" value="ECO:0007669"/>
    <property type="project" value="UniProtKB-KW"/>
</dbReference>
<dbReference type="GO" id="GO:0006526">
    <property type="term" value="P:L-arginine biosynthetic process"/>
    <property type="evidence" value="ECO:0007669"/>
    <property type="project" value="TreeGrafter"/>
</dbReference>
<dbReference type="GO" id="GO:0009089">
    <property type="term" value="P:lysine biosynthetic process via diaminopimelate"/>
    <property type="evidence" value="ECO:0007669"/>
    <property type="project" value="UniProtKB-UniPathway"/>
</dbReference>
<dbReference type="CDD" id="cd03891">
    <property type="entry name" value="M20_DapE_proteobac"/>
    <property type="match status" value="1"/>
</dbReference>
<dbReference type="FunFam" id="3.30.70.360:FF:000011">
    <property type="entry name" value="Succinyl-diaminopimelate desuccinylase"/>
    <property type="match status" value="1"/>
</dbReference>
<dbReference type="FunFam" id="3.40.630.10:FF:000126">
    <property type="entry name" value="Succinyl-diaminopimelate desuccinylase"/>
    <property type="match status" value="1"/>
</dbReference>
<dbReference type="Gene3D" id="3.40.630.10">
    <property type="entry name" value="Zn peptidases"/>
    <property type="match status" value="2"/>
</dbReference>
<dbReference type="HAMAP" id="MF_01690">
    <property type="entry name" value="DapE"/>
    <property type="match status" value="1"/>
</dbReference>
<dbReference type="InterPro" id="IPR001261">
    <property type="entry name" value="ArgE/DapE_CS"/>
</dbReference>
<dbReference type="InterPro" id="IPR036264">
    <property type="entry name" value="Bact_exopeptidase_dim_dom"/>
</dbReference>
<dbReference type="InterPro" id="IPR005941">
    <property type="entry name" value="DapE_proteobac"/>
</dbReference>
<dbReference type="InterPro" id="IPR002933">
    <property type="entry name" value="Peptidase_M20"/>
</dbReference>
<dbReference type="InterPro" id="IPR011650">
    <property type="entry name" value="Peptidase_M20_dimer"/>
</dbReference>
<dbReference type="InterPro" id="IPR050072">
    <property type="entry name" value="Peptidase_M20A"/>
</dbReference>
<dbReference type="NCBIfam" id="TIGR01246">
    <property type="entry name" value="dapE_proteo"/>
    <property type="match status" value="1"/>
</dbReference>
<dbReference type="NCBIfam" id="NF009557">
    <property type="entry name" value="PRK13009.1"/>
    <property type="match status" value="1"/>
</dbReference>
<dbReference type="PANTHER" id="PTHR43808">
    <property type="entry name" value="ACETYLORNITHINE DEACETYLASE"/>
    <property type="match status" value="1"/>
</dbReference>
<dbReference type="PANTHER" id="PTHR43808:SF31">
    <property type="entry name" value="N-ACETYL-L-CITRULLINE DEACETYLASE"/>
    <property type="match status" value="1"/>
</dbReference>
<dbReference type="Pfam" id="PF07687">
    <property type="entry name" value="M20_dimer"/>
    <property type="match status" value="1"/>
</dbReference>
<dbReference type="Pfam" id="PF01546">
    <property type="entry name" value="Peptidase_M20"/>
    <property type="match status" value="1"/>
</dbReference>
<dbReference type="SUPFAM" id="SSF55031">
    <property type="entry name" value="Bacterial exopeptidase dimerisation domain"/>
    <property type="match status" value="1"/>
</dbReference>
<dbReference type="SUPFAM" id="SSF53187">
    <property type="entry name" value="Zn-dependent exopeptidases"/>
    <property type="match status" value="1"/>
</dbReference>
<dbReference type="PROSITE" id="PS00759">
    <property type="entry name" value="ARGE_DAPE_CPG2_2"/>
    <property type="match status" value="1"/>
</dbReference>
<gene>
    <name evidence="1" type="primary">dapE</name>
    <name type="ordered locus">HPSH_01095</name>
</gene>
<proteinExistence type="inferred from homology"/>
<reference key="1">
    <citation type="submission" date="2008-05" db="EMBL/GenBank/DDBJ databases">
        <title>Genome sequence of Helicobacter pylori from the remote Amazon: traces of Asian ancestry of the first Americans.</title>
        <authorList>
            <person name="Kersulyte D."/>
            <person name="Kalia A."/>
            <person name="Gilman R.H."/>
            <person name="Berg D.E."/>
        </authorList>
    </citation>
    <scope>NUCLEOTIDE SEQUENCE [LARGE SCALE GENOMIC DNA]</scope>
    <source>
        <strain>Shi470</strain>
    </source>
</reference>
<name>DAPE_HELPS</name>
<feature type="chain" id="PRO_0000375590" description="Succinyl-diaminopimelate desuccinylase">
    <location>
        <begin position="1"/>
        <end position="383"/>
    </location>
</feature>
<feature type="active site" evidence="1">
    <location>
        <position position="81"/>
    </location>
</feature>
<feature type="active site" description="Proton acceptor" evidence="1">
    <location>
        <position position="141"/>
    </location>
</feature>
<feature type="binding site" evidence="1">
    <location>
        <position position="79"/>
    </location>
    <ligand>
        <name>Zn(2+)</name>
        <dbReference type="ChEBI" id="CHEBI:29105"/>
        <label>1</label>
    </ligand>
</feature>
<feature type="binding site" evidence="1">
    <location>
        <position position="110"/>
    </location>
    <ligand>
        <name>Zn(2+)</name>
        <dbReference type="ChEBI" id="CHEBI:29105"/>
        <label>1</label>
    </ligand>
</feature>
<feature type="binding site" evidence="1">
    <location>
        <position position="110"/>
    </location>
    <ligand>
        <name>Zn(2+)</name>
        <dbReference type="ChEBI" id="CHEBI:29105"/>
        <label>2</label>
    </ligand>
</feature>
<feature type="binding site" evidence="1">
    <location>
        <position position="142"/>
    </location>
    <ligand>
        <name>Zn(2+)</name>
        <dbReference type="ChEBI" id="CHEBI:29105"/>
        <label>2</label>
    </ligand>
</feature>
<feature type="binding site" evidence="1">
    <location>
        <position position="170"/>
    </location>
    <ligand>
        <name>Zn(2+)</name>
        <dbReference type="ChEBI" id="CHEBI:29105"/>
        <label>1</label>
    </ligand>
</feature>
<feature type="binding site" evidence="1">
    <location>
        <position position="355"/>
    </location>
    <ligand>
        <name>Zn(2+)</name>
        <dbReference type="ChEBI" id="CHEBI:29105"/>
        <label>2</label>
    </ligand>
</feature>
<organism>
    <name type="scientific">Helicobacter pylori (strain Shi470)</name>
    <dbReference type="NCBI Taxonomy" id="512562"/>
    <lineage>
        <taxon>Bacteria</taxon>
        <taxon>Pseudomonadati</taxon>
        <taxon>Campylobacterota</taxon>
        <taxon>Epsilonproteobacteria</taxon>
        <taxon>Campylobacterales</taxon>
        <taxon>Helicobacteraceae</taxon>
        <taxon>Helicobacter</taxon>
    </lineage>
</organism>
<sequence>MDALEITQKLISYPTITPKECGIFEYIKSLFPTFKTLECGENGVKNLFLYRIFNPPKEHTEEKHAKESVKPLHFCFAGHIDVVPPGNHWQSDPFKPIIKEGFLYGRGAQDMKGGVGAFLSASLNFNPKTPFMLSVLLTSDEEGPGIFGTRLMLEKLKEKDLLPHMAIVAEPTCEKILGDSIKIGRRGSINGKLILKGTQGHVAYPQKCQNPIDALASVLPLISGVHLDDGDEYFDPSKLVITNLHAGLGANNVTPASVEIIFNARHSLKTTKESLKEYLEKVLKNAPHTLELESSSSPFITASHSKLASVLKENILKTCHTTPLLNTKGGTSDARFFSAHGIEVVEFGVINDRIHAIDERVSLKELELLEKVFLGVLENLSEK</sequence>